<sequence>MAAGVATWLPFARAAAVGWLPLAQQPLPPAPEVKASRGDEVLVVNVSGRRFETWKNTLDRYPDTLLGSSEKEFFYDAESGEYFFDRDPDMFRHVLNFYRTGRLHCPRQECIQAFDEELAFYGLVPELVGDCCLEEYRDRKKENAERLAEDEEAEQAGEGPALPAGSSLRQRLWRAFENPHTSTAALVFYYVTGFFIAVSVIANVVETIPCRGTPRWPSKEQSCGDRFPTAFFCMDTACVLIFTGEYLLRLFAAPSRCRFLRSVMSLIDVVAILPYYIGLFVPKNDDVSGAFVTLRVFRVFRIFKFSRHSQGLRILGYTLKSCASELGFLLFSLTMAIIIFATVMFYAEKGTSKTNFTSIPAAFWYTIVTMTTLGYGDMVPSTIAGKIFGSICSLSGVLVIALPVPVIVSNFSRIYHQNQRADKRRAQQKVRLARIRLAKSGTTNAFLQYKQNGGLEDSGSGDGQMLCVRSRSAFEQQHHHLLHCLEKTTCHEFTDELTFSEALGAVSLGGRTSRSTSVSSQPMGPGSLFSSCCSRRVNRRAIRLANSTASVSRGSMQELDTLAGLRRSPAPQTRSSLNAKPHDSLDLNCDSRDFVAAIISIPTPPANTPDESQPSSPSGGGGSGGTPNTTLRNSSLGTPCLLPETVKISSL</sequence>
<evidence type="ECO:0000250" key="1">
    <source>
        <dbReference type="UniProtKB" id="P63142"/>
    </source>
</evidence>
<evidence type="ECO:0000250" key="2">
    <source>
        <dbReference type="UniProtKB" id="Q63881"/>
    </source>
</evidence>
<evidence type="ECO:0000250" key="3">
    <source>
        <dbReference type="UniProtKB" id="Q9NSA2"/>
    </source>
</evidence>
<evidence type="ECO:0000250" key="4">
    <source>
        <dbReference type="UniProtKB" id="Q9NZV8"/>
    </source>
</evidence>
<evidence type="ECO:0000255" key="5"/>
<evidence type="ECO:0000256" key="6">
    <source>
        <dbReference type="SAM" id="MobiDB-lite"/>
    </source>
</evidence>
<evidence type="ECO:0000269" key="7">
    <source>
    </source>
</evidence>
<evidence type="ECO:0000269" key="8">
    <source>
    </source>
</evidence>
<evidence type="ECO:0000269" key="9">
    <source>
    </source>
</evidence>
<evidence type="ECO:0000269" key="10">
    <source>
    </source>
</evidence>
<evidence type="ECO:0000303" key="11">
    <source>
    </source>
</evidence>
<evidence type="ECO:0000305" key="12"/>
<evidence type="ECO:0000312" key="13">
    <source>
        <dbReference type="MGI" id="MGI:96671"/>
    </source>
</evidence>
<evidence type="ECO:0007744" key="14">
    <source>
    </source>
</evidence>
<proteinExistence type="evidence at protein level"/>
<keyword id="KW-1003">Cell membrane</keyword>
<keyword id="KW-0325">Glycoprotein</keyword>
<keyword id="KW-0407">Ion channel</keyword>
<keyword id="KW-0406">Ion transport</keyword>
<keyword id="KW-0472">Membrane</keyword>
<keyword id="KW-0479">Metal-binding</keyword>
<keyword id="KW-0597">Phosphoprotein</keyword>
<keyword id="KW-0630">Potassium</keyword>
<keyword id="KW-0631">Potassium channel</keyword>
<keyword id="KW-0633">Potassium transport</keyword>
<keyword id="KW-1185">Reference proteome</keyword>
<keyword id="KW-0812">Transmembrane</keyword>
<keyword id="KW-1133">Transmembrane helix</keyword>
<keyword id="KW-0813">Transport</keyword>
<keyword id="KW-0851">Voltage-gated channel</keyword>
<keyword id="KW-0862">Zinc</keyword>
<feature type="chain" id="PRO_0000054062" description="A-type voltage-gated potassium channel KCND1">
    <location>
        <begin position="1"/>
        <end position="651"/>
    </location>
</feature>
<feature type="topological domain" description="Cytoplasmic" evidence="1">
    <location>
        <begin position="1"/>
        <end position="183"/>
    </location>
</feature>
<feature type="transmembrane region" description="Helical; Name=Segment S1" evidence="1">
    <location>
        <begin position="184"/>
        <end position="205"/>
    </location>
</feature>
<feature type="topological domain" description="Extracellular" evidence="1">
    <location>
        <begin position="206"/>
        <end position="230"/>
    </location>
</feature>
<feature type="transmembrane region" description="Helical; Name=Segment S2" evidence="1">
    <location>
        <begin position="231"/>
        <end position="252"/>
    </location>
</feature>
<feature type="topological domain" description="Cytoplasmic" evidence="1">
    <location>
        <begin position="253"/>
        <end position="263"/>
    </location>
</feature>
<feature type="transmembrane region" description="Helical; Name=Segment S3" evidence="1">
    <location>
        <begin position="264"/>
        <end position="284"/>
    </location>
</feature>
<feature type="topological domain" description="Extracellular" evidence="1">
    <location>
        <begin position="285"/>
        <end position="287"/>
    </location>
</feature>
<feature type="transmembrane region" description="Helical; Voltage-sensor; Name=Segment S4" evidence="1">
    <location>
        <begin position="288"/>
        <end position="308"/>
    </location>
</feature>
<feature type="topological domain" description="Cytoplasmic" evidence="1">
    <location>
        <begin position="309"/>
        <end position="323"/>
    </location>
</feature>
<feature type="transmembrane region" description="Helical; Name=Segment S5" evidence="1">
    <location>
        <begin position="324"/>
        <end position="345"/>
    </location>
</feature>
<feature type="topological domain" description="Extracellular" evidence="1">
    <location>
        <begin position="346"/>
        <end position="359"/>
    </location>
</feature>
<feature type="intramembrane region" description="Helical; Name=Pore helix" evidence="1">
    <location>
        <begin position="360"/>
        <end position="371"/>
    </location>
</feature>
<feature type="intramembrane region" evidence="1">
    <location>
        <begin position="372"/>
        <end position="379"/>
    </location>
</feature>
<feature type="topological domain" description="Extracellular" evidence="1">
    <location>
        <begin position="380"/>
        <end position="386"/>
    </location>
</feature>
<feature type="transmembrane region" description="Helical; Name=Segment S6" evidence="1">
    <location>
        <begin position="387"/>
        <end position="415"/>
    </location>
</feature>
<feature type="topological domain" description="Cytoplasmic" evidence="1">
    <location>
        <begin position="416"/>
        <end position="651"/>
    </location>
</feature>
<feature type="region of interest" description="Interaction with KCNIP1, KCNIP2, and other family members" evidence="2">
    <location>
        <begin position="2"/>
        <end position="20"/>
    </location>
</feature>
<feature type="region of interest" description="Disordered" evidence="6">
    <location>
        <begin position="144"/>
        <end position="164"/>
    </location>
</feature>
<feature type="region of interest" description="S4-S5 linker" evidence="1">
    <location>
        <begin position="310"/>
        <end position="323"/>
    </location>
</feature>
<feature type="region of interest" description="Required for dendritic targeting" evidence="2">
    <location>
        <begin position="474"/>
        <end position="489"/>
    </location>
</feature>
<feature type="region of interest" description="Disordered" evidence="6">
    <location>
        <begin position="566"/>
        <end position="585"/>
    </location>
</feature>
<feature type="region of interest" description="Disordered" evidence="6">
    <location>
        <begin position="601"/>
        <end position="651"/>
    </location>
</feature>
<feature type="short sequence motif" description="Selectivity filter" evidence="1">
    <location>
        <begin position="372"/>
        <end position="377"/>
    </location>
</feature>
<feature type="compositionally biased region" description="Polar residues" evidence="6">
    <location>
        <begin position="626"/>
        <end position="637"/>
    </location>
</feature>
<feature type="binding site" evidence="2">
    <location>
        <position position="104"/>
    </location>
    <ligand>
        <name>Zn(2+)</name>
        <dbReference type="ChEBI" id="CHEBI:29105"/>
    </ligand>
</feature>
<feature type="binding site" evidence="2">
    <location>
        <position position="131"/>
    </location>
    <ligand>
        <name>Zn(2+)</name>
        <dbReference type="ChEBI" id="CHEBI:29105"/>
    </ligand>
</feature>
<feature type="binding site" evidence="2">
    <location>
        <position position="132"/>
    </location>
    <ligand>
        <name>Zn(2+)</name>
        <dbReference type="ChEBI" id="CHEBI:29105"/>
    </ligand>
</feature>
<feature type="modified residue" description="Phosphoserine" evidence="14">
    <location>
        <position position="458"/>
    </location>
</feature>
<feature type="modified residue" description="Phosphoserine" evidence="14">
    <location>
        <position position="555"/>
    </location>
</feature>
<feature type="glycosylation site" description="N-linked (GlcNAc...) asparagine" evidence="5">
    <location>
        <position position="355"/>
    </location>
</feature>
<name>KCND1_MOUSE</name>
<accession>Q03719</accession>
<accession>Q8CC68</accession>
<dbReference type="EMBL" id="M64226">
    <property type="protein sequence ID" value="AAA39745.1"/>
    <property type="molecule type" value="mRNA"/>
</dbReference>
<dbReference type="EMBL" id="AK033805">
    <property type="protein sequence ID" value="BAC28480.1"/>
    <property type="molecule type" value="mRNA"/>
</dbReference>
<dbReference type="CCDS" id="CCDS29974.1"/>
<dbReference type="PIR" id="A39372">
    <property type="entry name" value="A39372"/>
</dbReference>
<dbReference type="RefSeq" id="NP_032449.1">
    <property type="nucleotide sequence ID" value="NM_008423.2"/>
</dbReference>
<dbReference type="RefSeq" id="XP_036017720.1">
    <property type="nucleotide sequence ID" value="XM_036161827.1"/>
</dbReference>
<dbReference type="SMR" id="Q03719"/>
<dbReference type="BioGRID" id="200889">
    <property type="interactions" value="2"/>
</dbReference>
<dbReference type="FunCoup" id="Q03719">
    <property type="interactions" value="10"/>
</dbReference>
<dbReference type="IntAct" id="Q03719">
    <property type="interactions" value="1"/>
</dbReference>
<dbReference type="MINT" id="Q03719"/>
<dbReference type="STRING" id="10090.ENSMUSP00000009875"/>
<dbReference type="GuidetoPHARMACOLOGY" id="552"/>
<dbReference type="GlyCosmos" id="Q03719">
    <property type="glycosylation" value="1 site, No reported glycans"/>
</dbReference>
<dbReference type="GlyGen" id="Q03719">
    <property type="glycosylation" value="2 sites, 1 O-linked glycan (1 site)"/>
</dbReference>
<dbReference type="iPTMnet" id="Q03719"/>
<dbReference type="PhosphoSitePlus" id="Q03719"/>
<dbReference type="SwissPalm" id="Q03719"/>
<dbReference type="PaxDb" id="10090-ENSMUSP00000009875"/>
<dbReference type="ProteomicsDB" id="269260"/>
<dbReference type="Antibodypedia" id="370">
    <property type="antibodies" value="254 antibodies from 31 providers"/>
</dbReference>
<dbReference type="DNASU" id="16506"/>
<dbReference type="Ensembl" id="ENSMUST00000009875.5">
    <property type="protein sequence ID" value="ENSMUSP00000009875.5"/>
    <property type="gene ID" value="ENSMUSG00000009731.5"/>
</dbReference>
<dbReference type="GeneID" id="16506"/>
<dbReference type="KEGG" id="mmu:16506"/>
<dbReference type="UCSC" id="uc009sms.1">
    <property type="organism name" value="mouse"/>
</dbReference>
<dbReference type="AGR" id="MGI:96671"/>
<dbReference type="CTD" id="3750"/>
<dbReference type="MGI" id="MGI:96671">
    <property type="gene designation" value="Kcnd1"/>
</dbReference>
<dbReference type="VEuPathDB" id="HostDB:ENSMUSG00000009731"/>
<dbReference type="eggNOG" id="KOG4390">
    <property type="taxonomic scope" value="Eukaryota"/>
</dbReference>
<dbReference type="GeneTree" id="ENSGT00940000162057"/>
<dbReference type="HOGENOM" id="CLU_011722_9_1_1"/>
<dbReference type="InParanoid" id="Q03719"/>
<dbReference type="OMA" id="RFPMAFF"/>
<dbReference type="OrthoDB" id="433309at2759"/>
<dbReference type="PhylomeDB" id="Q03719"/>
<dbReference type="TreeFam" id="TF313103"/>
<dbReference type="Reactome" id="R-MMU-1296072">
    <property type="pathway name" value="Voltage gated Potassium channels"/>
</dbReference>
<dbReference type="Reactome" id="R-MMU-5576894">
    <property type="pathway name" value="Phase 1 - inactivation of fast Na+ channels"/>
</dbReference>
<dbReference type="BioGRID-ORCS" id="16506">
    <property type="hits" value="6 hits in 79 CRISPR screens"/>
</dbReference>
<dbReference type="ChiTaRS" id="Kcnd1">
    <property type="organism name" value="mouse"/>
</dbReference>
<dbReference type="PRO" id="PR:Q03719"/>
<dbReference type="Proteomes" id="UP000000589">
    <property type="component" value="Chromosome X"/>
</dbReference>
<dbReference type="RNAct" id="Q03719">
    <property type="molecule type" value="protein"/>
</dbReference>
<dbReference type="Bgee" id="ENSMUSG00000009731">
    <property type="expression patterns" value="Expressed in lumbar dorsal root ganglion and 80 other cell types or tissues"/>
</dbReference>
<dbReference type="ExpressionAtlas" id="Q03719">
    <property type="expression patterns" value="baseline and differential"/>
</dbReference>
<dbReference type="GO" id="GO:0043025">
    <property type="term" value="C:neuronal cell body"/>
    <property type="evidence" value="ECO:0007669"/>
    <property type="project" value="Ensembl"/>
</dbReference>
<dbReference type="GO" id="GO:0008076">
    <property type="term" value="C:voltage-gated potassium channel complex"/>
    <property type="evidence" value="ECO:0000314"/>
    <property type="project" value="UniProtKB"/>
</dbReference>
<dbReference type="GO" id="GO:0005250">
    <property type="term" value="F:A-type (transient outward) potassium channel activity"/>
    <property type="evidence" value="ECO:0000314"/>
    <property type="project" value="UniProtKB"/>
</dbReference>
<dbReference type="GO" id="GO:0046872">
    <property type="term" value="F:metal ion binding"/>
    <property type="evidence" value="ECO:0007669"/>
    <property type="project" value="UniProtKB-KW"/>
</dbReference>
<dbReference type="GO" id="GO:0051260">
    <property type="term" value="P:protein homooligomerization"/>
    <property type="evidence" value="ECO:0007669"/>
    <property type="project" value="InterPro"/>
</dbReference>
<dbReference type="FunFam" id="1.20.120.350:FF:000016">
    <property type="entry name" value="Potassium voltage-gated channel subfamily D member 3"/>
    <property type="match status" value="1"/>
</dbReference>
<dbReference type="FunFam" id="3.30.710.10:FF:000004">
    <property type="entry name" value="Potassium voltage-gated channel subfamily D member 3"/>
    <property type="match status" value="1"/>
</dbReference>
<dbReference type="FunFam" id="1.10.287.70:FF:000028">
    <property type="entry name" value="potassium voltage-gated channel subfamily D member 3"/>
    <property type="match status" value="1"/>
</dbReference>
<dbReference type="Gene3D" id="1.10.287.70">
    <property type="match status" value="1"/>
</dbReference>
<dbReference type="Gene3D" id="3.30.710.10">
    <property type="entry name" value="Potassium Channel Kv1.1, Chain A"/>
    <property type="match status" value="1"/>
</dbReference>
<dbReference type="Gene3D" id="1.20.120.350">
    <property type="entry name" value="Voltage-gated potassium channels. Chain C"/>
    <property type="match status" value="1"/>
</dbReference>
<dbReference type="InterPro" id="IPR000210">
    <property type="entry name" value="BTB/POZ_dom"/>
</dbReference>
<dbReference type="InterPro" id="IPR005821">
    <property type="entry name" value="Ion_trans_dom"/>
</dbReference>
<dbReference type="InterPro" id="IPR003968">
    <property type="entry name" value="K_chnl_volt-dep_Kv"/>
</dbReference>
<dbReference type="InterPro" id="IPR003975">
    <property type="entry name" value="K_chnl_volt-dep_Kv4"/>
</dbReference>
<dbReference type="InterPro" id="IPR004054">
    <property type="entry name" value="K_chnl_volt-dep_Kv4.1"/>
</dbReference>
<dbReference type="InterPro" id="IPR024587">
    <property type="entry name" value="K_chnl_volt-dep_Kv4_C"/>
</dbReference>
<dbReference type="InterPro" id="IPR021645">
    <property type="entry name" value="Shal-type_N"/>
</dbReference>
<dbReference type="InterPro" id="IPR011333">
    <property type="entry name" value="SKP1/BTB/POZ_sf"/>
</dbReference>
<dbReference type="InterPro" id="IPR003131">
    <property type="entry name" value="T1-type_BTB"/>
</dbReference>
<dbReference type="InterPro" id="IPR028325">
    <property type="entry name" value="VG_K_chnl"/>
</dbReference>
<dbReference type="InterPro" id="IPR027359">
    <property type="entry name" value="Volt_channel_dom_sf"/>
</dbReference>
<dbReference type="PANTHER" id="PTHR11537:SF174">
    <property type="entry name" value="POTASSIUM VOLTAGE-GATED CHANNEL SUBFAMILY D MEMBER 1"/>
    <property type="match status" value="1"/>
</dbReference>
<dbReference type="PANTHER" id="PTHR11537">
    <property type="entry name" value="VOLTAGE-GATED POTASSIUM CHANNEL"/>
    <property type="match status" value="1"/>
</dbReference>
<dbReference type="Pfam" id="PF02214">
    <property type="entry name" value="BTB_2"/>
    <property type="match status" value="1"/>
</dbReference>
<dbReference type="Pfam" id="PF11879">
    <property type="entry name" value="DUF3399"/>
    <property type="match status" value="1"/>
</dbReference>
<dbReference type="Pfam" id="PF00520">
    <property type="entry name" value="Ion_trans"/>
    <property type="match status" value="1"/>
</dbReference>
<dbReference type="Pfam" id="PF11601">
    <property type="entry name" value="Shal-type"/>
    <property type="match status" value="1"/>
</dbReference>
<dbReference type="PRINTS" id="PR00169">
    <property type="entry name" value="KCHANNEL"/>
</dbReference>
<dbReference type="PRINTS" id="PR01516">
    <property type="entry name" value="KV41CHANNEL"/>
</dbReference>
<dbReference type="PRINTS" id="PR01491">
    <property type="entry name" value="KVCHANNEL"/>
</dbReference>
<dbReference type="PRINTS" id="PR01497">
    <property type="entry name" value="SHALCHANNEL"/>
</dbReference>
<dbReference type="SMART" id="SM00225">
    <property type="entry name" value="BTB"/>
    <property type="match status" value="1"/>
</dbReference>
<dbReference type="SUPFAM" id="SSF54695">
    <property type="entry name" value="POZ domain"/>
    <property type="match status" value="1"/>
</dbReference>
<dbReference type="SUPFAM" id="SSF81324">
    <property type="entry name" value="Voltage-gated potassium channels"/>
    <property type="match status" value="1"/>
</dbReference>
<reference key="1">
    <citation type="journal article" date="1991" name="Proc. Natl. Acad. Sci. U.S.A.">
        <title>mShal, a subfamily of A-type K+ channel cloned from mammalian brain.</title>
        <authorList>
            <person name="Pak M.D."/>
            <person name="Baker K."/>
            <person name="Covarrubias M."/>
            <person name="Butler A."/>
            <person name="Ratcliffe A."/>
            <person name="Salkoff L."/>
        </authorList>
    </citation>
    <scope>NUCLEOTIDE SEQUENCE [MRNA]</scope>
    <scope>FUNCTION</scope>
    <scope>TRANSPORTER ACTIVITY</scope>
    <source>
        <tissue>Brain</tissue>
    </source>
</reference>
<reference key="2">
    <citation type="journal article" date="2005" name="Science">
        <title>The transcriptional landscape of the mammalian genome.</title>
        <authorList>
            <person name="Carninci P."/>
            <person name="Kasukawa T."/>
            <person name="Katayama S."/>
            <person name="Gough J."/>
            <person name="Frith M.C."/>
            <person name="Maeda N."/>
            <person name="Oyama R."/>
            <person name="Ravasi T."/>
            <person name="Lenhard B."/>
            <person name="Wells C."/>
            <person name="Kodzius R."/>
            <person name="Shimokawa K."/>
            <person name="Bajic V.B."/>
            <person name="Brenner S.E."/>
            <person name="Batalov S."/>
            <person name="Forrest A.R."/>
            <person name="Zavolan M."/>
            <person name="Davis M.J."/>
            <person name="Wilming L.G."/>
            <person name="Aidinis V."/>
            <person name="Allen J.E."/>
            <person name="Ambesi-Impiombato A."/>
            <person name="Apweiler R."/>
            <person name="Aturaliya R.N."/>
            <person name="Bailey T.L."/>
            <person name="Bansal M."/>
            <person name="Baxter L."/>
            <person name="Beisel K.W."/>
            <person name="Bersano T."/>
            <person name="Bono H."/>
            <person name="Chalk A.M."/>
            <person name="Chiu K.P."/>
            <person name="Choudhary V."/>
            <person name="Christoffels A."/>
            <person name="Clutterbuck D.R."/>
            <person name="Crowe M.L."/>
            <person name="Dalla E."/>
            <person name="Dalrymple B.P."/>
            <person name="de Bono B."/>
            <person name="Della Gatta G."/>
            <person name="di Bernardo D."/>
            <person name="Down T."/>
            <person name="Engstrom P."/>
            <person name="Fagiolini M."/>
            <person name="Faulkner G."/>
            <person name="Fletcher C.F."/>
            <person name="Fukushima T."/>
            <person name="Furuno M."/>
            <person name="Futaki S."/>
            <person name="Gariboldi M."/>
            <person name="Georgii-Hemming P."/>
            <person name="Gingeras T.R."/>
            <person name="Gojobori T."/>
            <person name="Green R.E."/>
            <person name="Gustincich S."/>
            <person name="Harbers M."/>
            <person name="Hayashi Y."/>
            <person name="Hensch T.K."/>
            <person name="Hirokawa N."/>
            <person name="Hill D."/>
            <person name="Huminiecki L."/>
            <person name="Iacono M."/>
            <person name="Ikeo K."/>
            <person name="Iwama A."/>
            <person name="Ishikawa T."/>
            <person name="Jakt M."/>
            <person name="Kanapin A."/>
            <person name="Katoh M."/>
            <person name="Kawasawa Y."/>
            <person name="Kelso J."/>
            <person name="Kitamura H."/>
            <person name="Kitano H."/>
            <person name="Kollias G."/>
            <person name="Krishnan S.P."/>
            <person name="Kruger A."/>
            <person name="Kummerfeld S.K."/>
            <person name="Kurochkin I.V."/>
            <person name="Lareau L.F."/>
            <person name="Lazarevic D."/>
            <person name="Lipovich L."/>
            <person name="Liu J."/>
            <person name="Liuni S."/>
            <person name="McWilliam S."/>
            <person name="Madan Babu M."/>
            <person name="Madera M."/>
            <person name="Marchionni L."/>
            <person name="Matsuda H."/>
            <person name="Matsuzawa S."/>
            <person name="Miki H."/>
            <person name="Mignone F."/>
            <person name="Miyake S."/>
            <person name="Morris K."/>
            <person name="Mottagui-Tabar S."/>
            <person name="Mulder N."/>
            <person name="Nakano N."/>
            <person name="Nakauchi H."/>
            <person name="Ng P."/>
            <person name="Nilsson R."/>
            <person name="Nishiguchi S."/>
            <person name="Nishikawa S."/>
            <person name="Nori F."/>
            <person name="Ohara O."/>
            <person name="Okazaki Y."/>
            <person name="Orlando V."/>
            <person name="Pang K.C."/>
            <person name="Pavan W.J."/>
            <person name="Pavesi G."/>
            <person name="Pesole G."/>
            <person name="Petrovsky N."/>
            <person name="Piazza S."/>
            <person name="Reed J."/>
            <person name="Reid J.F."/>
            <person name="Ring B.Z."/>
            <person name="Ringwald M."/>
            <person name="Rost B."/>
            <person name="Ruan Y."/>
            <person name="Salzberg S.L."/>
            <person name="Sandelin A."/>
            <person name="Schneider C."/>
            <person name="Schoenbach C."/>
            <person name="Sekiguchi K."/>
            <person name="Semple C.A."/>
            <person name="Seno S."/>
            <person name="Sessa L."/>
            <person name="Sheng Y."/>
            <person name="Shibata Y."/>
            <person name="Shimada H."/>
            <person name="Shimada K."/>
            <person name="Silva D."/>
            <person name="Sinclair B."/>
            <person name="Sperling S."/>
            <person name="Stupka E."/>
            <person name="Sugiura K."/>
            <person name="Sultana R."/>
            <person name="Takenaka Y."/>
            <person name="Taki K."/>
            <person name="Tammoja K."/>
            <person name="Tan S.L."/>
            <person name="Tang S."/>
            <person name="Taylor M.S."/>
            <person name="Tegner J."/>
            <person name="Teichmann S.A."/>
            <person name="Ueda H.R."/>
            <person name="van Nimwegen E."/>
            <person name="Verardo R."/>
            <person name="Wei C.L."/>
            <person name="Yagi K."/>
            <person name="Yamanishi H."/>
            <person name="Zabarovsky E."/>
            <person name="Zhu S."/>
            <person name="Zimmer A."/>
            <person name="Hide W."/>
            <person name="Bult C."/>
            <person name="Grimmond S.M."/>
            <person name="Teasdale R.D."/>
            <person name="Liu E.T."/>
            <person name="Brusic V."/>
            <person name="Quackenbush J."/>
            <person name="Wahlestedt C."/>
            <person name="Mattick J.S."/>
            <person name="Hume D.A."/>
            <person name="Kai C."/>
            <person name="Sasaki D."/>
            <person name="Tomaru Y."/>
            <person name="Fukuda S."/>
            <person name="Kanamori-Katayama M."/>
            <person name="Suzuki M."/>
            <person name="Aoki J."/>
            <person name="Arakawa T."/>
            <person name="Iida J."/>
            <person name="Imamura K."/>
            <person name="Itoh M."/>
            <person name="Kato T."/>
            <person name="Kawaji H."/>
            <person name="Kawagashira N."/>
            <person name="Kawashima T."/>
            <person name="Kojima M."/>
            <person name="Kondo S."/>
            <person name="Konno H."/>
            <person name="Nakano K."/>
            <person name="Ninomiya N."/>
            <person name="Nishio T."/>
            <person name="Okada M."/>
            <person name="Plessy C."/>
            <person name="Shibata K."/>
            <person name="Shiraki T."/>
            <person name="Suzuki S."/>
            <person name="Tagami M."/>
            <person name="Waki K."/>
            <person name="Watahiki A."/>
            <person name="Okamura-Oho Y."/>
            <person name="Suzuki H."/>
            <person name="Kawai J."/>
            <person name="Hayashizaki Y."/>
        </authorList>
    </citation>
    <scope>NUCLEOTIDE SEQUENCE [LARGE SCALE MRNA] OF 145-647</scope>
    <source>
        <strain>C57BL/6J</strain>
        <tissue>Epididymis</tissue>
    </source>
</reference>
<reference key="3">
    <citation type="journal article" date="2001" name="FEBS Lett.">
        <title>Different effects of the Ca(2+)-binding protein, KChIP1, on two Kv4 subfamily members, Kv4.1 and Kv4.2.</title>
        <authorList>
            <person name="Nakamura T.Y."/>
            <person name="Nandi S."/>
            <person name="Pountney D.J."/>
            <person name="Artman M."/>
            <person name="Rudy B."/>
            <person name="Coetzee W.A."/>
        </authorList>
    </citation>
    <scope>FUNCTION</scope>
    <scope>TRANSPORTER ACTIVITY</scope>
</reference>
<reference key="4">
    <citation type="journal article" date="2009" name="Channels">
        <title>Proteomic analyses of native brain K(V)4.2 channel complexes.</title>
        <authorList>
            <person name="Marionneau C."/>
            <person name="LeDuc R.D."/>
            <person name="Rohrs H.W."/>
            <person name="Link A.J."/>
            <person name="Townsend R.R."/>
            <person name="Nerbonne J.M."/>
        </authorList>
    </citation>
    <scope>SUBUNIT</scope>
    <scope>IDENTIFICATION BY MASS SPECTROMETRY</scope>
</reference>
<reference key="5">
    <citation type="journal article" date="2010" name="Cell">
        <title>A tissue-specific atlas of mouse protein phosphorylation and expression.</title>
        <authorList>
            <person name="Huttlin E.L."/>
            <person name="Jedrychowski M.P."/>
            <person name="Elias J.E."/>
            <person name="Goswami T."/>
            <person name="Rad R."/>
            <person name="Beausoleil S.A."/>
            <person name="Villen J."/>
            <person name="Haas W."/>
            <person name="Sowa M.E."/>
            <person name="Gygi S.P."/>
        </authorList>
    </citation>
    <scope>PHOSPHORYLATION [LARGE SCALE ANALYSIS] AT SER-458 AND SER-555</scope>
    <scope>IDENTIFICATION BY MASS SPECTROMETRY [LARGE SCALE ANALYSIS]</scope>
    <source>
        <tissue>Brain</tissue>
    </source>
</reference>
<reference key="6">
    <citation type="journal article" date="2017" name="ENeuro">
        <title>Acute Knockdown of Kv4.1 Regulates Repetitive Firing Rates and Clock Gene Expression in the Suprachiasmatic Nucleus and Daily Rhythms in Locomotor Behavior.</title>
        <authorList>
            <person name="Hermanstyne T.O."/>
            <person name="Granados-Fuentes D."/>
            <person name="Mellor R.L."/>
            <person name="Herzog E.D."/>
            <person name="Nerbonne J.M."/>
        </authorList>
    </citation>
    <scope>FUNCTION</scope>
    <scope>TRANSPORTER ACTIVITY</scope>
</reference>
<comment type="function">
    <text evidence="3 7 9 10">A-type voltage-gated potassium channel that mediates transmembrane potassium transport in excitable membranes in the brain (PubMed:28560311). Mediates A-type current I(SA) in suprachiasmatic nucleus (SCN) neurons (PubMed:28560311). Exhibits a low-threshold A-type current with a hyperpolarized steady-state inactivation midpoint and the recovery process was steeply voltage-dependent, with recovery being markedly faster at more negative potentials (PubMed:2034678). May regulates repetitive firing rates in the suprachiasmatic nucleus (SCN) neurons and circadian rhythms in neuronal excitability and behavior (PubMed:28560311). Contributes to the regulation of the circadian rhythm of action potential firing in suprachiasmatic nucleus neurons, which regulates the circadian rhythm of locomotor activity (PubMed:28560311). The regulatory subunit KCNIP1 modulates the kinetics of channel inactivation, increases the current amplitudes and accelerates recovery from inactivation, shifts activation in a depolarizing direction (PubMed:11423117). The regulatory subunit DPP10 decreases the voltage sensitivity of the inactivation channel gating (By similarity).</text>
</comment>
<comment type="catalytic activity">
    <reaction evidence="7 9 10">
        <text>K(+)(in) = K(+)(out)</text>
        <dbReference type="Rhea" id="RHEA:29463"/>
        <dbReference type="ChEBI" id="CHEBI:29103"/>
    </reaction>
</comment>
<comment type="subunit">
    <text evidence="8">Component of heteromultimeric potassium channels (PubMed:19713751). Identified in potassium channel complexes containing KCND1, KCND2, KCND3, KCNIP1, KCNIP2, KCNIP3, KCNIP4, DPP6 and DPP10 (PubMed:19713751).</text>
</comment>
<comment type="subcellular location">
    <subcellularLocation>
        <location evidence="4">Cell membrane</location>
        <topology evidence="4">Multi-pass membrane protein</topology>
    </subcellularLocation>
</comment>
<comment type="domain">
    <text evidence="1">The transmembrane segment S4 functions as a voltage-sensor and is characterized by a series of positively charged amino acids at every third position. Channel opening and closing is effected by a conformation change that affects the position and orientation of the voltage-sensor paddle formed by S3 and S4 within the membrane. A transmembrane electric field that is positive inside would push the positively charged S4 segment outwards, thereby opening the pore, while a field that is negative inside would pull the S4 segment inwards and close the pore. Changes in the position and orientation of S4 are then transmitted to the activation gate formed by the inner helix bundle via the S4-S5 linker region.</text>
</comment>
<comment type="domain">
    <text evidence="2 4">The zinc binding sites in the N-terminal domain are important for tetramerization and assembly of a functional channel complex (By similarity). Most likely, the channel undergoes closed-state inactivation, where a subtle conformation change would render the protein less sensitive to activation (By similarity).</text>
</comment>
<comment type="similarity">
    <text evidence="12">Belongs to the potassium channel family. D (Shal) (TC 1.A.1.2) subfamily. Kv4.1/KCND1 sub-subfamily.</text>
</comment>
<protein>
    <recommendedName>
        <fullName evidence="12">A-type voltage-gated potassium channel KCND1</fullName>
    </recommendedName>
    <alternativeName>
        <fullName>Potassium voltage-gated channel subfamily D member 1</fullName>
    </alternativeName>
    <alternativeName>
        <fullName>Voltage-gated potassium channel subunit Kv4.1</fullName>
        <shortName evidence="11">mShal</shortName>
    </alternativeName>
</protein>
<gene>
    <name evidence="13" type="primary">Kcnd1</name>
</gene>
<organism>
    <name type="scientific">Mus musculus</name>
    <name type="common">Mouse</name>
    <dbReference type="NCBI Taxonomy" id="10090"/>
    <lineage>
        <taxon>Eukaryota</taxon>
        <taxon>Metazoa</taxon>
        <taxon>Chordata</taxon>
        <taxon>Craniata</taxon>
        <taxon>Vertebrata</taxon>
        <taxon>Euteleostomi</taxon>
        <taxon>Mammalia</taxon>
        <taxon>Eutheria</taxon>
        <taxon>Euarchontoglires</taxon>
        <taxon>Glires</taxon>
        <taxon>Rodentia</taxon>
        <taxon>Myomorpha</taxon>
        <taxon>Muroidea</taxon>
        <taxon>Muridae</taxon>
        <taxon>Murinae</taxon>
        <taxon>Mus</taxon>
        <taxon>Mus</taxon>
    </lineage>
</organism>